<evidence type="ECO:0000255" key="1">
    <source>
        <dbReference type="HAMAP-Rule" id="MF_01003"/>
    </source>
</evidence>
<accession>C6DHE3</accession>
<protein>
    <recommendedName>
        <fullName evidence="1">Probable ECA polymerase</fullName>
    </recommendedName>
</protein>
<keyword id="KW-0997">Cell inner membrane</keyword>
<keyword id="KW-1003">Cell membrane</keyword>
<keyword id="KW-0472">Membrane</keyword>
<keyword id="KW-0812">Transmembrane</keyword>
<keyword id="KW-1133">Transmembrane helix</keyword>
<dbReference type="EMBL" id="CP001657">
    <property type="protein sequence ID" value="ACT15016.1"/>
    <property type="molecule type" value="Genomic_DNA"/>
</dbReference>
<dbReference type="RefSeq" id="WP_015842096.1">
    <property type="nucleotide sequence ID" value="NC_012917.1"/>
</dbReference>
<dbReference type="STRING" id="561230.PC1_4001"/>
<dbReference type="KEGG" id="pct:PC1_4001"/>
<dbReference type="eggNOG" id="ENOG502Z7MA">
    <property type="taxonomic scope" value="Bacteria"/>
</dbReference>
<dbReference type="HOGENOM" id="CLU_049711_0_0_6"/>
<dbReference type="OrthoDB" id="6415259at2"/>
<dbReference type="UniPathway" id="UPA00566"/>
<dbReference type="Proteomes" id="UP000002736">
    <property type="component" value="Chromosome"/>
</dbReference>
<dbReference type="GO" id="GO:0005886">
    <property type="term" value="C:plasma membrane"/>
    <property type="evidence" value="ECO:0007669"/>
    <property type="project" value="UniProtKB-SubCell"/>
</dbReference>
<dbReference type="GO" id="GO:0009246">
    <property type="term" value="P:enterobacterial common antigen biosynthetic process"/>
    <property type="evidence" value="ECO:0007669"/>
    <property type="project" value="UniProtKB-UniRule"/>
</dbReference>
<dbReference type="HAMAP" id="MF_01003">
    <property type="entry name" value="WzyE"/>
    <property type="match status" value="1"/>
</dbReference>
<dbReference type="InterPro" id="IPR010691">
    <property type="entry name" value="WzyE"/>
</dbReference>
<dbReference type="NCBIfam" id="NF002820">
    <property type="entry name" value="PRK02975.1"/>
    <property type="match status" value="1"/>
</dbReference>
<dbReference type="Pfam" id="PF06899">
    <property type="entry name" value="WzyE"/>
    <property type="match status" value="1"/>
</dbReference>
<reference key="1">
    <citation type="submission" date="2009-07" db="EMBL/GenBank/DDBJ databases">
        <title>Complete sequence of Pectobacterium carotovorum subsp. carotovorum PC1.</title>
        <authorList>
            <consortium name="US DOE Joint Genome Institute"/>
            <person name="Lucas S."/>
            <person name="Copeland A."/>
            <person name="Lapidus A."/>
            <person name="Glavina del Rio T."/>
            <person name="Tice H."/>
            <person name="Bruce D."/>
            <person name="Goodwin L."/>
            <person name="Pitluck S."/>
            <person name="Munk A.C."/>
            <person name="Brettin T."/>
            <person name="Detter J.C."/>
            <person name="Han C."/>
            <person name="Tapia R."/>
            <person name="Larimer F."/>
            <person name="Land M."/>
            <person name="Hauser L."/>
            <person name="Kyrpides N."/>
            <person name="Mikhailova N."/>
            <person name="Balakrishnan V."/>
            <person name="Glasner J."/>
            <person name="Perna N.T."/>
        </authorList>
    </citation>
    <scope>NUCLEOTIDE SEQUENCE [LARGE SCALE GENOMIC DNA]</scope>
    <source>
        <strain>PC1</strain>
    </source>
</reference>
<feature type="chain" id="PRO_1000213142" description="Probable ECA polymerase">
    <location>
        <begin position="1"/>
        <end position="463"/>
    </location>
</feature>
<feature type="transmembrane region" description="Helical" evidence="1">
    <location>
        <begin position="6"/>
        <end position="26"/>
    </location>
</feature>
<feature type="transmembrane region" description="Helical" evidence="1">
    <location>
        <begin position="39"/>
        <end position="59"/>
    </location>
</feature>
<feature type="transmembrane region" description="Helical" evidence="1">
    <location>
        <begin position="65"/>
        <end position="85"/>
    </location>
</feature>
<feature type="transmembrane region" description="Helical" evidence="1">
    <location>
        <begin position="112"/>
        <end position="132"/>
    </location>
</feature>
<feature type="transmembrane region" description="Helical" evidence="1">
    <location>
        <begin position="154"/>
        <end position="174"/>
    </location>
</feature>
<feature type="transmembrane region" description="Helical" evidence="1">
    <location>
        <begin position="180"/>
        <end position="200"/>
    </location>
</feature>
<feature type="transmembrane region" description="Helical" evidence="1">
    <location>
        <begin position="201"/>
        <end position="221"/>
    </location>
</feature>
<feature type="transmembrane region" description="Helical" evidence="1">
    <location>
        <begin position="222"/>
        <end position="242"/>
    </location>
</feature>
<feature type="transmembrane region" description="Helical" evidence="1">
    <location>
        <begin position="340"/>
        <end position="360"/>
    </location>
</feature>
<feature type="transmembrane region" description="Helical" evidence="1">
    <location>
        <begin position="377"/>
        <end position="397"/>
    </location>
</feature>
<feature type="transmembrane region" description="Helical" evidence="1">
    <location>
        <begin position="408"/>
        <end position="428"/>
    </location>
</feature>
<proteinExistence type="inferred from homology"/>
<gene>
    <name evidence="1" type="primary">wzyE</name>
    <name type="ordered locus">PC1_4001</name>
</gene>
<organism>
    <name type="scientific">Pectobacterium carotovorum subsp. carotovorum (strain PC1)</name>
    <dbReference type="NCBI Taxonomy" id="561230"/>
    <lineage>
        <taxon>Bacteria</taxon>
        <taxon>Pseudomonadati</taxon>
        <taxon>Pseudomonadota</taxon>
        <taxon>Gammaproteobacteria</taxon>
        <taxon>Enterobacterales</taxon>
        <taxon>Pectobacteriaceae</taxon>
        <taxon>Pectobacterium</taxon>
    </lineage>
</organism>
<sequence>MTLGQFGGLFVVYLISVIFILSLTWMEFRRVRFNFNVLFSLLYLLTFYFGFPFTCVLVFRFGVDVVPVQFLLQAMLSATAFYAIYYVSYKTRLRQKTSVPRAPLLTVNRVEANLTWLLLALIAVATVGIFFLNNGFLLFKLRSYSQIFSSDVSGVALKRFFYFFIPAMLVVYFLRQTQRAWLMFLIGTVAFGMLTYVIVGGTRANLIIAFALFLFIGIVRGWITLWMLVAAGAFGIVGMFWLALKRYGLDVSGDYAFYTFLYLTRDTFSPWENLALLWQNYDKIEFQGLAPIARDFYVFIPSWLWPDRPNLVLNSANYFTWEVLNNHSGLAISPTLLGSLVVMGGVLFIPLGAIAVGLVIKWFDWVYELGKNDSNRYKAAILQAFCFGAVFNIIVLTREGVDSFVSRVVFFCLVFGLCLLVAKLLYWLLESAGLIRQRLMRMRATPLVPTPNTVPDPVIKEQL</sequence>
<name>WZYE_PECCP</name>
<comment type="function">
    <text evidence="1">Probably involved in the polymerization of enterobacterial common antigen (ECA) trisaccharide repeat units.</text>
</comment>
<comment type="pathway">
    <text evidence="1">Bacterial outer membrane biogenesis; enterobacterial common antigen biosynthesis.</text>
</comment>
<comment type="subunit">
    <text evidence="1">Probably part of a complex composed of WzxE, WzyE and WzzE.</text>
</comment>
<comment type="subcellular location">
    <subcellularLocation>
        <location evidence="1">Cell inner membrane</location>
        <topology evidence="1">Multi-pass membrane protein</topology>
    </subcellularLocation>
</comment>
<comment type="similarity">
    <text evidence="1">Belongs to the WzyE family.</text>
</comment>